<protein>
    <recommendedName>
        <fullName>G2/mitotic-specific cyclin-B3</fullName>
    </recommendedName>
</protein>
<feature type="chain" id="PRO_0000080381" description="G2/mitotic-specific cyclin-B3">
    <location>
        <begin position="1"/>
        <end position="385"/>
    </location>
</feature>
<feature type="region of interest" description="Disordered" evidence="1">
    <location>
        <begin position="1"/>
        <end position="48"/>
    </location>
</feature>
<feature type="region of interest" description="Disordered" evidence="1">
    <location>
        <begin position="63"/>
        <end position="88"/>
    </location>
</feature>
<feature type="compositionally biased region" description="Polar residues" evidence="1">
    <location>
        <begin position="1"/>
        <end position="16"/>
    </location>
</feature>
<feature type="compositionally biased region" description="Basic and acidic residues" evidence="1">
    <location>
        <begin position="17"/>
        <end position="28"/>
    </location>
</feature>
<feature type="compositionally biased region" description="Basic and acidic residues" evidence="1">
    <location>
        <begin position="63"/>
        <end position="80"/>
    </location>
</feature>
<feature type="splice variant" id="VSP_041644" description="In isoform b." evidence="3">
    <location>
        <position position="16"/>
    </location>
</feature>
<name>CCNB3_CAEEL</name>
<gene>
    <name type="primary">cyb-3</name>
    <name type="synonym">cyb-2</name>
    <name type="ORF">T06E6.2</name>
</gene>
<keyword id="KW-0025">Alternative splicing</keyword>
<keyword id="KW-0131">Cell cycle</keyword>
<keyword id="KW-0132">Cell division</keyword>
<keyword id="KW-0195">Cyclin</keyword>
<keyword id="KW-0469">Meiosis</keyword>
<keyword id="KW-0498">Mitosis</keyword>
<keyword id="KW-0539">Nucleus</keyword>
<keyword id="KW-1185">Reference proteome</keyword>
<organism>
    <name type="scientific">Caenorhabditis elegans</name>
    <dbReference type="NCBI Taxonomy" id="6239"/>
    <lineage>
        <taxon>Eukaryota</taxon>
        <taxon>Metazoa</taxon>
        <taxon>Ecdysozoa</taxon>
        <taxon>Nematoda</taxon>
        <taxon>Chromadorea</taxon>
        <taxon>Rhabditida</taxon>
        <taxon>Rhabditina</taxon>
        <taxon>Rhabditomorpha</taxon>
        <taxon>Rhabditoidea</taxon>
        <taxon>Rhabditidae</taxon>
        <taxon>Peloderinae</taxon>
        <taxon>Caenorhabditis</taxon>
    </lineage>
</organism>
<accession>Q10654</accession>
<accession>Q95ZP8</accession>
<accession>Q9U378</accession>
<comment type="function">
    <text evidence="2 3">Could be involved at the G2/M (mitosis) transition (Probable). Interacts with the CDK1 and CDK2 protein kinases (Probable). G2/M cyclins accumulate steadily during G2 and are abruptly destroyed at mitosis (Probable). Plays a role during oocyte meiosis II (PubMed:20599902).</text>
</comment>
<comment type="subcellular location">
    <subcellularLocation>
        <location>Nucleus</location>
    </subcellularLocation>
</comment>
<comment type="alternative products">
    <event type="alternative splicing"/>
    <isoform>
        <id>Q10654-1</id>
        <name>a</name>
        <sequence type="displayed"/>
    </isoform>
    <isoform>
        <id>Q10654-2</id>
        <name>b</name>
        <sequence type="described" ref="VSP_041644"/>
    </isoform>
</comment>
<comment type="disruption phenotype">
    <text evidence="2">RNAi-mediated knockdown causes a longer meiosis II in 1-cell embryos without affecting meiotic exit timing. In a pam-1 (or282) mutant background, restores normal timing for meiotic exit.</text>
</comment>
<comment type="similarity">
    <text evidence="3">Belongs to the cyclin family. Cyclin AB subfamily.</text>
</comment>
<dbReference type="EMBL" id="U21282">
    <property type="protein sequence ID" value="AAA84395.1"/>
    <property type="molecule type" value="mRNA"/>
</dbReference>
<dbReference type="EMBL" id="Z81117">
    <property type="protein sequence ID" value="CAB03311.2"/>
    <property type="molecule type" value="Genomic_DNA"/>
</dbReference>
<dbReference type="EMBL" id="Z81117">
    <property type="protein sequence ID" value="CAC42336.2"/>
    <property type="molecule type" value="Genomic_DNA"/>
</dbReference>
<dbReference type="PIR" id="T24596">
    <property type="entry name" value="T24596"/>
</dbReference>
<dbReference type="RefSeq" id="NP_001024112.2">
    <molecule id="Q10654-2"/>
    <property type="nucleotide sequence ID" value="NM_001028941.4"/>
</dbReference>
<dbReference type="RefSeq" id="NP_506825.4">
    <molecule id="Q10654-1"/>
    <property type="nucleotide sequence ID" value="NM_074424.6"/>
</dbReference>
<dbReference type="SMR" id="Q10654"/>
<dbReference type="BioGRID" id="45035">
    <property type="interactions" value="4"/>
</dbReference>
<dbReference type="DIP" id="DIP-25112N"/>
<dbReference type="FunCoup" id="Q10654">
    <property type="interactions" value="1091"/>
</dbReference>
<dbReference type="IntAct" id="Q10654">
    <property type="interactions" value="1"/>
</dbReference>
<dbReference type="STRING" id="6239.T06E6.2a.1"/>
<dbReference type="PaxDb" id="6239-T06E6.2a.2"/>
<dbReference type="PeptideAtlas" id="Q10654"/>
<dbReference type="EnsemblMetazoa" id="T06E6.2a.1">
    <molecule id="Q10654-1"/>
    <property type="protein sequence ID" value="T06E6.2a.1"/>
    <property type="gene ID" value="WBGene00000868"/>
</dbReference>
<dbReference type="EnsemblMetazoa" id="T06E6.2a.2">
    <molecule id="Q10654-1"/>
    <property type="protein sequence ID" value="T06E6.2a.2"/>
    <property type="gene ID" value="WBGene00000868"/>
</dbReference>
<dbReference type="EnsemblMetazoa" id="T06E6.2b.1">
    <molecule id="Q10654-2"/>
    <property type="protein sequence ID" value="T06E6.2b.1"/>
    <property type="gene ID" value="WBGene00000868"/>
</dbReference>
<dbReference type="GeneID" id="180040"/>
<dbReference type="KEGG" id="cel:CELE_T06E6.2"/>
<dbReference type="UCSC" id="T06E6.2a.1">
    <molecule id="Q10654-1"/>
    <property type="organism name" value="c. elegans"/>
</dbReference>
<dbReference type="AGR" id="WB:WBGene00000868"/>
<dbReference type="CTD" id="180040"/>
<dbReference type="WormBase" id="T06E6.2a">
    <molecule id="Q10654-1"/>
    <property type="protein sequence ID" value="CE45171"/>
    <property type="gene ID" value="WBGene00000868"/>
    <property type="gene designation" value="cyb-3"/>
</dbReference>
<dbReference type="WormBase" id="T06E6.2b">
    <molecule id="Q10654-2"/>
    <property type="protein sequence ID" value="CE45189"/>
    <property type="gene ID" value="WBGene00000868"/>
    <property type="gene designation" value="cyb-3"/>
</dbReference>
<dbReference type="eggNOG" id="KOG0653">
    <property type="taxonomic scope" value="Eukaryota"/>
</dbReference>
<dbReference type="GeneTree" id="ENSGT00940000160459"/>
<dbReference type="InParanoid" id="Q10654"/>
<dbReference type="OMA" id="VEPLMWE"/>
<dbReference type="OrthoDB" id="5590282at2759"/>
<dbReference type="PhylomeDB" id="Q10654"/>
<dbReference type="PRO" id="PR:Q10654"/>
<dbReference type="Proteomes" id="UP000001940">
    <property type="component" value="Chromosome V"/>
</dbReference>
<dbReference type="Bgee" id="WBGene00000868">
    <property type="expression patterns" value="Expressed in embryo and 4 other cell types or tissues"/>
</dbReference>
<dbReference type="GO" id="GO:0000307">
    <property type="term" value="C:cyclin-dependent protein kinase holoenzyme complex"/>
    <property type="evidence" value="ECO:0000318"/>
    <property type="project" value="GO_Central"/>
</dbReference>
<dbReference type="GO" id="GO:0005737">
    <property type="term" value="C:cytoplasm"/>
    <property type="evidence" value="ECO:0000314"/>
    <property type="project" value="WormBase"/>
</dbReference>
<dbReference type="GO" id="GO:0005634">
    <property type="term" value="C:nucleus"/>
    <property type="evidence" value="ECO:0000314"/>
    <property type="project" value="WormBase"/>
</dbReference>
<dbReference type="GO" id="GO:0016538">
    <property type="term" value="F:cyclin-dependent protein serine/threonine kinase regulator activity"/>
    <property type="evidence" value="ECO:0000314"/>
    <property type="project" value="WormBase"/>
</dbReference>
<dbReference type="GO" id="GO:0051301">
    <property type="term" value="P:cell division"/>
    <property type="evidence" value="ECO:0007669"/>
    <property type="project" value="UniProtKB-KW"/>
</dbReference>
<dbReference type="GO" id="GO:0007098">
    <property type="term" value="P:centrosome cycle"/>
    <property type="evidence" value="ECO:0000315"/>
    <property type="project" value="WormBase"/>
</dbReference>
<dbReference type="GO" id="GO:0000082">
    <property type="term" value="P:G1/S transition of mitotic cell cycle"/>
    <property type="evidence" value="ECO:0000318"/>
    <property type="project" value="GO_Central"/>
</dbReference>
<dbReference type="GO" id="GO:0051383">
    <property type="term" value="P:kinetochore organization"/>
    <property type="evidence" value="ECO:0000315"/>
    <property type="project" value="WormBase"/>
</dbReference>
<dbReference type="GO" id="GO:0051321">
    <property type="term" value="P:meiotic cell cycle"/>
    <property type="evidence" value="ECO:0000315"/>
    <property type="project" value="UniProtKB"/>
</dbReference>
<dbReference type="GO" id="GO:0045144">
    <property type="term" value="P:meiotic sister chromatid segregation"/>
    <property type="evidence" value="ECO:0000315"/>
    <property type="project" value="WormBase"/>
</dbReference>
<dbReference type="GO" id="GO:0000278">
    <property type="term" value="P:mitotic cell cycle"/>
    <property type="evidence" value="ECO:0000315"/>
    <property type="project" value="WormBase"/>
</dbReference>
<dbReference type="GO" id="GO:0000070">
    <property type="term" value="P:mitotic sister chromatid segregation"/>
    <property type="evidence" value="ECO:0000315"/>
    <property type="project" value="WormBase"/>
</dbReference>
<dbReference type="GO" id="GO:0045138">
    <property type="term" value="P:nematode male tail tip morphogenesis"/>
    <property type="evidence" value="ECO:0000315"/>
    <property type="project" value="UniProtKB"/>
</dbReference>
<dbReference type="GO" id="GO:0001556">
    <property type="term" value="P:oocyte maturation"/>
    <property type="evidence" value="ECO:0000316"/>
    <property type="project" value="WormBase"/>
</dbReference>
<dbReference type="GO" id="GO:0045842">
    <property type="term" value="P:positive regulation of mitotic metaphase/anaphase transition"/>
    <property type="evidence" value="ECO:0000315"/>
    <property type="project" value="WormBase"/>
</dbReference>
<dbReference type="GO" id="GO:0001934">
    <property type="term" value="P:positive regulation of protein phosphorylation"/>
    <property type="evidence" value="ECO:0000314"/>
    <property type="project" value="WormBase"/>
</dbReference>
<dbReference type="GO" id="GO:0035046">
    <property type="term" value="P:pronuclear migration"/>
    <property type="evidence" value="ECO:0000315"/>
    <property type="project" value="WormBase"/>
</dbReference>
<dbReference type="GO" id="GO:0051445">
    <property type="term" value="P:regulation of meiotic cell cycle"/>
    <property type="evidence" value="ECO:0000315"/>
    <property type="project" value="UniProtKB"/>
</dbReference>
<dbReference type="CDD" id="cd20508">
    <property type="entry name" value="CYCLIN_CCNB3_rpt1"/>
    <property type="match status" value="1"/>
</dbReference>
<dbReference type="CDD" id="cd20510">
    <property type="entry name" value="CYCLIN_CCNB3_rpt2"/>
    <property type="match status" value="1"/>
</dbReference>
<dbReference type="FunFam" id="1.10.472.10:FF:000005">
    <property type="entry name" value="G2/mitotic-specific cyclin B"/>
    <property type="match status" value="1"/>
</dbReference>
<dbReference type="FunFam" id="1.10.472.10:FF:000316">
    <property type="entry name" value="G2/mitotic-specific cyclin-B3"/>
    <property type="match status" value="1"/>
</dbReference>
<dbReference type="Gene3D" id="1.10.472.10">
    <property type="entry name" value="Cyclin-like"/>
    <property type="match status" value="2"/>
</dbReference>
<dbReference type="InterPro" id="IPR039361">
    <property type="entry name" value="Cyclin"/>
</dbReference>
<dbReference type="InterPro" id="IPR013763">
    <property type="entry name" value="Cyclin-like_dom"/>
</dbReference>
<dbReference type="InterPro" id="IPR036915">
    <property type="entry name" value="Cyclin-like_sf"/>
</dbReference>
<dbReference type="InterPro" id="IPR046965">
    <property type="entry name" value="Cyclin_A/B-like"/>
</dbReference>
<dbReference type="InterPro" id="IPR004367">
    <property type="entry name" value="Cyclin_C-dom"/>
</dbReference>
<dbReference type="InterPro" id="IPR006671">
    <property type="entry name" value="Cyclin_N"/>
</dbReference>
<dbReference type="PANTHER" id="PTHR10177">
    <property type="entry name" value="CYCLINS"/>
    <property type="match status" value="1"/>
</dbReference>
<dbReference type="Pfam" id="PF02984">
    <property type="entry name" value="Cyclin_C"/>
    <property type="match status" value="1"/>
</dbReference>
<dbReference type="Pfam" id="PF00134">
    <property type="entry name" value="Cyclin_N"/>
    <property type="match status" value="1"/>
</dbReference>
<dbReference type="PIRSF" id="PIRSF001771">
    <property type="entry name" value="Cyclin_A_B_D_E"/>
    <property type="match status" value="1"/>
</dbReference>
<dbReference type="SMART" id="SM00385">
    <property type="entry name" value="CYCLIN"/>
    <property type="match status" value="2"/>
</dbReference>
<dbReference type="SMART" id="SM01332">
    <property type="entry name" value="Cyclin_C"/>
    <property type="match status" value="1"/>
</dbReference>
<dbReference type="SUPFAM" id="SSF47954">
    <property type="entry name" value="Cyclin-like"/>
    <property type="match status" value="2"/>
</dbReference>
<evidence type="ECO:0000256" key="1">
    <source>
        <dbReference type="SAM" id="MobiDB-lite"/>
    </source>
</evidence>
<evidence type="ECO:0000269" key="2">
    <source>
    </source>
</evidence>
<evidence type="ECO:0000305" key="3"/>
<reference key="1">
    <citation type="journal article" date="1995" name="J. Cell Sci.">
        <title>Caenorhabditis elegans cyclin A- and B-type genes: a cyclin A multigene family, an ancestral cyclin B3 and differential germline expression.</title>
        <authorList>
            <person name="Kreutzer M.A."/>
            <person name="Richards J.P."/>
            <person name="de Silva-Udawatta M.N."/>
            <person name="Temenak J.J."/>
            <person name="Knoblich J.A."/>
            <person name="Lehner C.F."/>
            <person name="Bennett K.L."/>
        </authorList>
    </citation>
    <scope>NUCLEOTIDE SEQUENCE [MRNA] (ISOFORM A)</scope>
    <source>
        <strain>Bristol N2</strain>
    </source>
</reference>
<reference key="2">
    <citation type="journal article" date="1998" name="Science">
        <title>Genome sequence of the nematode C. elegans: a platform for investigating biology.</title>
        <authorList>
            <consortium name="The C. elegans sequencing consortium"/>
        </authorList>
    </citation>
    <scope>NUCLEOTIDE SEQUENCE [LARGE SCALE GENOMIC DNA]</scope>
    <scope>ALTERNATIVE SPLICING</scope>
    <source>
        <strain>Bristol N2</strain>
    </source>
</reference>
<reference key="3">
    <citation type="journal article" date="2010" name="Dev. Biol.">
        <title>The PAM-1 aminopeptidase regulates centrosome positioning to ensure anterior-posterior axis specification in one-cell C. elegans embryos.</title>
        <authorList>
            <person name="Fortin S.M."/>
            <person name="Marshall S.L."/>
            <person name="Jaeger E.C."/>
            <person name="Greene P.E."/>
            <person name="Brady L.K."/>
            <person name="Isaac R.E."/>
            <person name="Schrandt J.C."/>
            <person name="Brooks D.R."/>
            <person name="Lyczak R."/>
        </authorList>
    </citation>
    <scope>FUNCTION</scope>
    <scope>DISRUPTION PHENOTYPE</scope>
</reference>
<proteinExistence type="evidence at transcript level"/>
<sequence length="385" mass="44757">MMLRSQAKNVDLTSQADSRHQQKRKQAEQLDALKNPSEPAAKKQHSKGLTELRAHISGFKIDSAKRDPLGKSRTSRRDVENLPPQKSRYVDPCPHYDYDLEEAGNPDSISDYAQGIFDYYRHREVHFRVRKYLHKHPEVDVKTRAILIDWMVEIQETFELNHETLYNAVKLTDMYLCKTKNVDKNTIQKLACVAIFIAAKYDERSPPLVDDLIYLSGDRFSRDELLAMERELFATVGYDLGSPLSYRYLRRFGRVCRVDMKTLTMGRFILETSLMVYEYAMVSQSRLAAAAFVLAMRMLDKNNEYEWNPVLEKYSGFTGEEVMPLVEHMNHILHFSKDKWAQLTSVRQKYSHEVFFHVASIPMLPDTLKVVDSHTYAPVPMLSYP</sequence>